<organism>
    <name type="scientific">Escherichia coli O139:H28 (strain E24377A / ETEC)</name>
    <dbReference type="NCBI Taxonomy" id="331111"/>
    <lineage>
        <taxon>Bacteria</taxon>
        <taxon>Pseudomonadati</taxon>
        <taxon>Pseudomonadota</taxon>
        <taxon>Gammaproteobacteria</taxon>
        <taxon>Enterobacterales</taxon>
        <taxon>Enterobacteriaceae</taxon>
        <taxon>Escherichia</taxon>
    </lineage>
</organism>
<sequence length="311" mass="34427">MANPLYQKHIISINDLSRDDLNLVLATAAKLKANPQPELLKHKVIASCFFEASTRTRLSFETSMHRLGASVVGFSDSANTSLGKKGETLADTISVISTYVDAIVMRHPQEGAARLATEFSGNVPVLNAGDGSNQHPTQTLLDLFTIQETQGRLDNLHVAMVGDLKYGRTVHSLTQALAKFDGNRFYFIAPDALAMPQYILDMLDEKGIAWSLHSSIEEVMAEVDILYMTRVQKERLDPSEYANVKAQFVLRASDLHNAKANMKVLHPLPRVDEIATDVDKTPHAWYFQQAGNGIFARQALLALVLNRDLVL</sequence>
<comment type="function">
    <text evidence="1">Catalyzes the condensation of carbamoyl phosphate and aspartate to form carbamoyl aspartate and inorganic phosphate, the committed step in the de novo pyrimidine nucleotide biosynthesis pathway.</text>
</comment>
<comment type="catalytic activity">
    <reaction evidence="1">
        <text>carbamoyl phosphate + L-aspartate = N-carbamoyl-L-aspartate + phosphate + H(+)</text>
        <dbReference type="Rhea" id="RHEA:20013"/>
        <dbReference type="ChEBI" id="CHEBI:15378"/>
        <dbReference type="ChEBI" id="CHEBI:29991"/>
        <dbReference type="ChEBI" id="CHEBI:32814"/>
        <dbReference type="ChEBI" id="CHEBI:43474"/>
        <dbReference type="ChEBI" id="CHEBI:58228"/>
        <dbReference type="EC" id="2.1.3.2"/>
    </reaction>
</comment>
<comment type="pathway">
    <text evidence="1">Pyrimidine metabolism; UMP biosynthesis via de novo pathway; (S)-dihydroorotate from bicarbonate: step 2/3.</text>
</comment>
<comment type="subunit">
    <text evidence="1">Heterododecamer (2C3:3R2) of six catalytic PyrB chains organized as two trimers (C3), and six regulatory PyrI chains organized as three dimers (R2).</text>
</comment>
<comment type="similarity">
    <text evidence="1">Belongs to the aspartate/ornithine carbamoyltransferase superfamily. ATCase family.</text>
</comment>
<protein>
    <recommendedName>
        <fullName evidence="1">Aspartate carbamoyltransferase catalytic subunit</fullName>
        <ecNumber evidence="1">2.1.3.2</ecNumber>
    </recommendedName>
    <alternativeName>
        <fullName evidence="1">Aspartate transcarbamylase</fullName>
        <shortName evidence="1">ATCase</shortName>
    </alternativeName>
</protein>
<reference key="1">
    <citation type="journal article" date="2008" name="J. Bacteriol.">
        <title>The pangenome structure of Escherichia coli: comparative genomic analysis of E. coli commensal and pathogenic isolates.</title>
        <authorList>
            <person name="Rasko D.A."/>
            <person name="Rosovitz M.J."/>
            <person name="Myers G.S.A."/>
            <person name="Mongodin E.F."/>
            <person name="Fricke W.F."/>
            <person name="Gajer P."/>
            <person name="Crabtree J."/>
            <person name="Sebaihia M."/>
            <person name="Thomson N.R."/>
            <person name="Chaudhuri R."/>
            <person name="Henderson I.R."/>
            <person name="Sperandio V."/>
            <person name="Ravel J."/>
        </authorList>
    </citation>
    <scope>NUCLEOTIDE SEQUENCE [LARGE SCALE GENOMIC DNA]</scope>
    <source>
        <strain>E24377A / ETEC</strain>
    </source>
</reference>
<feature type="chain" id="PRO_1000057010" description="Aspartate carbamoyltransferase catalytic subunit">
    <location>
        <begin position="1"/>
        <end position="311"/>
    </location>
</feature>
<feature type="binding site" evidence="1">
    <location>
        <position position="55"/>
    </location>
    <ligand>
        <name>carbamoyl phosphate</name>
        <dbReference type="ChEBI" id="CHEBI:58228"/>
    </ligand>
</feature>
<feature type="binding site" evidence="1">
    <location>
        <position position="56"/>
    </location>
    <ligand>
        <name>carbamoyl phosphate</name>
        <dbReference type="ChEBI" id="CHEBI:58228"/>
    </ligand>
</feature>
<feature type="binding site" evidence="1">
    <location>
        <position position="85"/>
    </location>
    <ligand>
        <name>L-aspartate</name>
        <dbReference type="ChEBI" id="CHEBI:29991"/>
    </ligand>
</feature>
<feature type="binding site" evidence="1">
    <location>
        <position position="106"/>
    </location>
    <ligand>
        <name>carbamoyl phosphate</name>
        <dbReference type="ChEBI" id="CHEBI:58228"/>
    </ligand>
</feature>
<feature type="binding site" evidence="1">
    <location>
        <position position="135"/>
    </location>
    <ligand>
        <name>carbamoyl phosphate</name>
        <dbReference type="ChEBI" id="CHEBI:58228"/>
    </ligand>
</feature>
<feature type="binding site" evidence="1">
    <location>
        <position position="138"/>
    </location>
    <ligand>
        <name>carbamoyl phosphate</name>
        <dbReference type="ChEBI" id="CHEBI:58228"/>
    </ligand>
</feature>
<feature type="binding site" evidence="1">
    <location>
        <position position="168"/>
    </location>
    <ligand>
        <name>L-aspartate</name>
        <dbReference type="ChEBI" id="CHEBI:29991"/>
    </ligand>
</feature>
<feature type="binding site" evidence="1">
    <location>
        <position position="230"/>
    </location>
    <ligand>
        <name>L-aspartate</name>
        <dbReference type="ChEBI" id="CHEBI:29991"/>
    </ligand>
</feature>
<feature type="binding site" evidence="1">
    <location>
        <position position="268"/>
    </location>
    <ligand>
        <name>carbamoyl phosphate</name>
        <dbReference type="ChEBI" id="CHEBI:58228"/>
    </ligand>
</feature>
<feature type="binding site" evidence="1">
    <location>
        <position position="269"/>
    </location>
    <ligand>
        <name>carbamoyl phosphate</name>
        <dbReference type="ChEBI" id="CHEBI:58228"/>
    </ligand>
</feature>
<name>PYRB_ECO24</name>
<accession>A7ZVC7</accession>
<proteinExistence type="inferred from homology"/>
<gene>
    <name evidence="1" type="primary">pyrB</name>
    <name type="ordered locus">EcE24377A_4818</name>
</gene>
<dbReference type="EC" id="2.1.3.2" evidence="1"/>
<dbReference type="EMBL" id="CP000800">
    <property type="protein sequence ID" value="ABV18743.1"/>
    <property type="molecule type" value="Genomic_DNA"/>
</dbReference>
<dbReference type="RefSeq" id="WP_000013046.1">
    <property type="nucleotide sequence ID" value="NC_009801.1"/>
</dbReference>
<dbReference type="BMRB" id="A7ZVC7"/>
<dbReference type="SMR" id="A7ZVC7"/>
<dbReference type="GeneID" id="93777579"/>
<dbReference type="KEGG" id="ecw:EcE24377A_4818"/>
<dbReference type="HOGENOM" id="CLU_043846_1_2_6"/>
<dbReference type="UniPathway" id="UPA00070">
    <property type="reaction ID" value="UER00116"/>
</dbReference>
<dbReference type="Proteomes" id="UP000001122">
    <property type="component" value="Chromosome"/>
</dbReference>
<dbReference type="GO" id="GO:0005829">
    <property type="term" value="C:cytosol"/>
    <property type="evidence" value="ECO:0007669"/>
    <property type="project" value="TreeGrafter"/>
</dbReference>
<dbReference type="GO" id="GO:0016597">
    <property type="term" value="F:amino acid binding"/>
    <property type="evidence" value="ECO:0007669"/>
    <property type="project" value="InterPro"/>
</dbReference>
<dbReference type="GO" id="GO:0004070">
    <property type="term" value="F:aspartate carbamoyltransferase activity"/>
    <property type="evidence" value="ECO:0007669"/>
    <property type="project" value="UniProtKB-UniRule"/>
</dbReference>
<dbReference type="GO" id="GO:0006207">
    <property type="term" value="P:'de novo' pyrimidine nucleobase biosynthetic process"/>
    <property type="evidence" value="ECO:0007669"/>
    <property type="project" value="InterPro"/>
</dbReference>
<dbReference type="GO" id="GO:0044205">
    <property type="term" value="P:'de novo' UMP biosynthetic process"/>
    <property type="evidence" value="ECO:0007669"/>
    <property type="project" value="UniProtKB-UniRule"/>
</dbReference>
<dbReference type="GO" id="GO:0006520">
    <property type="term" value="P:amino acid metabolic process"/>
    <property type="evidence" value="ECO:0007669"/>
    <property type="project" value="InterPro"/>
</dbReference>
<dbReference type="FunFam" id="3.40.50.1370:FF:000001">
    <property type="entry name" value="Aspartate carbamoyltransferase"/>
    <property type="match status" value="1"/>
</dbReference>
<dbReference type="FunFam" id="3.40.50.1370:FF:000002">
    <property type="entry name" value="Aspartate carbamoyltransferase 2"/>
    <property type="match status" value="1"/>
</dbReference>
<dbReference type="Gene3D" id="3.40.50.1370">
    <property type="entry name" value="Aspartate/ornithine carbamoyltransferase"/>
    <property type="match status" value="2"/>
</dbReference>
<dbReference type="HAMAP" id="MF_00001">
    <property type="entry name" value="Asp_carb_tr"/>
    <property type="match status" value="1"/>
</dbReference>
<dbReference type="InterPro" id="IPR006132">
    <property type="entry name" value="Asp/Orn_carbamoyltranf_P-bd"/>
</dbReference>
<dbReference type="InterPro" id="IPR006130">
    <property type="entry name" value="Asp/Orn_carbamoylTrfase"/>
</dbReference>
<dbReference type="InterPro" id="IPR036901">
    <property type="entry name" value="Asp/Orn_carbamoylTrfase_sf"/>
</dbReference>
<dbReference type="InterPro" id="IPR002082">
    <property type="entry name" value="Asp_carbamoyltransf"/>
</dbReference>
<dbReference type="InterPro" id="IPR006131">
    <property type="entry name" value="Asp_carbamoyltransf_Asp/Orn-bd"/>
</dbReference>
<dbReference type="NCBIfam" id="TIGR00670">
    <property type="entry name" value="asp_carb_tr"/>
    <property type="match status" value="1"/>
</dbReference>
<dbReference type="NCBIfam" id="NF002032">
    <property type="entry name" value="PRK00856.1"/>
    <property type="match status" value="1"/>
</dbReference>
<dbReference type="PANTHER" id="PTHR45753:SF6">
    <property type="entry name" value="ASPARTATE CARBAMOYLTRANSFERASE"/>
    <property type="match status" value="1"/>
</dbReference>
<dbReference type="PANTHER" id="PTHR45753">
    <property type="entry name" value="ORNITHINE CARBAMOYLTRANSFERASE, MITOCHONDRIAL"/>
    <property type="match status" value="1"/>
</dbReference>
<dbReference type="Pfam" id="PF00185">
    <property type="entry name" value="OTCace"/>
    <property type="match status" value="1"/>
</dbReference>
<dbReference type="Pfam" id="PF02729">
    <property type="entry name" value="OTCace_N"/>
    <property type="match status" value="1"/>
</dbReference>
<dbReference type="PRINTS" id="PR00100">
    <property type="entry name" value="AOTCASE"/>
</dbReference>
<dbReference type="PRINTS" id="PR00101">
    <property type="entry name" value="ATCASE"/>
</dbReference>
<dbReference type="SUPFAM" id="SSF53671">
    <property type="entry name" value="Aspartate/ornithine carbamoyltransferase"/>
    <property type="match status" value="1"/>
</dbReference>
<dbReference type="PROSITE" id="PS00097">
    <property type="entry name" value="CARBAMOYLTRANSFERASE"/>
    <property type="match status" value="1"/>
</dbReference>
<keyword id="KW-0665">Pyrimidine biosynthesis</keyword>
<keyword id="KW-1185">Reference proteome</keyword>
<keyword id="KW-0808">Transferase</keyword>
<evidence type="ECO:0000255" key="1">
    <source>
        <dbReference type="HAMAP-Rule" id="MF_00001"/>
    </source>
</evidence>